<keyword id="KW-0687">Ribonucleoprotein</keyword>
<keyword id="KW-0689">Ribosomal protein</keyword>
<feature type="chain" id="PRO_1000144396" description="Large ribosomal subunit protein bL17">
    <location>
        <begin position="1"/>
        <end position="166"/>
    </location>
</feature>
<feature type="region of interest" description="Disordered" evidence="2">
    <location>
        <begin position="122"/>
        <end position="166"/>
    </location>
</feature>
<feature type="compositionally biased region" description="Basic and acidic residues" evidence="2">
    <location>
        <begin position="142"/>
        <end position="151"/>
    </location>
</feature>
<feature type="compositionally biased region" description="Low complexity" evidence="2">
    <location>
        <begin position="152"/>
        <end position="166"/>
    </location>
</feature>
<name>RL17_CHLPB</name>
<gene>
    <name evidence="1" type="primary">rplQ</name>
    <name type="ordered locus">Cphamn1_2268</name>
</gene>
<dbReference type="EMBL" id="CP001101">
    <property type="protein sequence ID" value="ACE05172.1"/>
    <property type="molecule type" value="Genomic_DNA"/>
</dbReference>
<dbReference type="SMR" id="B3EP33"/>
<dbReference type="STRING" id="331678.Cphamn1_2268"/>
<dbReference type="KEGG" id="cpb:Cphamn1_2268"/>
<dbReference type="eggNOG" id="COG0203">
    <property type="taxonomic scope" value="Bacteria"/>
</dbReference>
<dbReference type="HOGENOM" id="CLU_074407_0_1_10"/>
<dbReference type="OrthoDB" id="9809073at2"/>
<dbReference type="GO" id="GO:0022625">
    <property type="term" value="C:cytosolic large ribosomal subunit"/>
    <property type="evidence" value="ECO:0007669"/>
    <property type="project" value="TreeGrafter"/>
</dbReference>
<dbReference type="GO" id="GO:0003735">
    <property type="term" value="F:structural constituent of ribosome"/>
    <property type="evidence" value="ECO:0007669"/>
    <property type="project" value="InterPro"/>
</dbReference>
<dbReference type="GO" id="GO:0006412">
    <property type="term" value="P:translation"/>
    <property type="evidence" value="ECO:0007669"/>
    <property type="project" value="UniProtKB-UniRule"/>
</dbReference>
<dbReference type="Gene3D" id="3.90.1030.10">
    <property type="entry name" value="Ribosomal protein L17"/>
    <property type="match status" value="1"/>
</dbReference>
<dbReference type="HAMAP" id="MF_01368">
    <property type="entry name" value="Ribosomal_bL17"/>
    <property type="match status" value="1"/>
</dbReference>
<dbReference type="InterPro" id="IPR000456">
    <property type="entry name" value="Ribosomal_bL17"/>
</dbReference>
<dbReference type="InterPro" id="IPR047859">
    <property type="entry name" value="Ribosomal_bL17_CS"/>
</dbReference>
<dbReference type="InterPro" id="IPR036373">
    <property type="entry name" value="Ribosomal_bL17_sf"/>
</dbReference>
<dbReference type="NCBIfam" id="TIGR00059">
    <property type="entry name" value="L17"/>
    <property type="match status" value="1"/>
</dbReference>
<dbReference type="PANTHER" id="PTHR14413:SF16">
    <property type="entry name" value="LARGE RIBOSOMAL SUBUNIT PROTEIN BL17M"/>
    <property type="match status" value="1"/>
</dbReference>
<dbReference type="PANTHER" id="PTHR14413">
    <property type="entry name" value="RIBOSOMAL PROTEIN L17"/>
    <property type="match status" value="1"/>
</dbReference>
<dbReference type="Pfam" id="PF01196">
    <property type="entry name" value="Ribosomal_L17"/>
    <property type="match status" value="1"/>
</dbReference>
<dbReference type="SUPFAM" id="SSF64263">
    <property type="entry name" value="Prokaryotic ribosomal protein L17"/>
    <property type="match status" value="1"/>
</dbReference>
<dbReference type="PROSITE" id="PS01167">
    <property type="entry name" value="RIBOSOMAL_L17"/>
    <property type="match status" value="1"/>
</dbReference>
<reference key="1">
    <citation type="submission" date="2008-06" db="EMBL/GenBank/DDBJ databases">
        <title>Complete sequence of Chlorobium phaeobacteroides BS1.</title>
        <authorList>
            <consortium name="US DOE Joint Genome Institute"/>
            <person name="Lucas S."/>
            <person name="Copeland A."/>
            <person name="Lapidus A."/>
            <person name="Glavina del Rio T."/>
            <person name="Dalin E."/>
            <person name="Tice H."/>
            <person name="Bruce D."/>
            <person name="Goodwin L."/>
            <person name="Pitluck S."/>
            <person name="Schmutz J."/>
            <person name="Larimer F."/>
            <person name="Land M."/>
            <person name="Hauser L."/>
            <person name="Kyrpides N."/>
            <person name="Ovchinnikova G."/>
            <person name="Li T."/>
            <person name="Liu Z."/>
            <person name="Zhao F."/>
            <person name="Overmann J."/>
            <person name="Bryant D.A."/>
            <person name="Richardson P."/>
        </authorList>
    </citation>
    <scope>NUCLEOTIDE SEQUENCE [LARGE SCALE GENOMIC DNA]</scope>
    <source>
        <strain>BS1</strain>
    </source>
</reference>
<protein>
    <recommendedName>
        <fullName evidence="1">Large ribosomal subunit protein bL17</fullName>
    </recommendedName>
    <alternativeName>
        <fullName evidence="3">50S ribosomal protein L17</fullName>
    </alternativeName>
</protein>
<sequence>MRKVKSARKLGRTASHRKATLANLSTQLLLYKRIETTEAKAKETRKYVEKIITKAKGGTVHAQRIIFKKIRDKAAIRELFEDIVGKVADRNGGYTRVIKLAPRYGDAAKMAVIELVDYHEAPESAPVKAKQDRSKRVRGSKKTQEGSEKAEVSASAGEAAAVTEEK</sequence>
<comment type="subunit">
    <text evidence="1">Part of the 50S ribosomal subunit. Contacts protein L32.</text>
</comment>
<comment type="similarity">
    <text evidence="1">Belongs to the bacterial ribosomal protein bL17 family.</text>
</comment>
<evidence type="ECO:0000255" key="1">
    <source>
        <dbReference type="HAMAP-Rule" id="MF_01368"/>
    </source>
</evidence>
<evidence type="ECO:0000256" key="2">
    <source>
        <dbReference type="SAM" id="MobiDB-lite"/>
    </source>
</evidence>
<evidence type="ECO:0000305" key="3"/>
<proteinExistence type="inferred from homology"/>
<accession>B3EP33</accession>
<organism>
    <name type="scientific">Chlorobium phaeobacteroides (strain BS1)</name>
    <dbReference type="NCBI Taxonomy" id="331678"/>
    <lineage>
        <taxon>Bacteria</taxon>
        <taxon>Pseudomonadati</taxon>
        <taxon>Chlorobiota</taxon>
        <taxon>Chlorobiia</taxon>
        <taxon>Chlorobiales</taxon>
        <taxon>Chlorobiaceae</taxon>
        <taxon>Chlorobium/Pelodictyon group</taxon>
        <taxon>Chlorobium</taxon>
    </lineage>
</organism>